<proteinExistence type="inferred from homology"/>
<comment type="function">
    <text evidence="1">Modulates transcription in response to changes in cellular NADH/NAD(+) redox state.</text>
</comment>
<comment type="subunit">
    <text evidence="1">Homodimer.</text>
</comment>
<comment type="subcellular location">
    <subcellularLocation>
        <location evidence="1">Cytoplasm</location>
    </subcellularLocation>
</comment>
<comment type="similarity">
    <text evidence="1">Belongs to the transcriptional regulatory Rex family.</text>
</comment>
<name>REX_BACCN</name>
<feature type="chain" id="PRO_1000085021" description="Redox-sensing transcriptional repressor Rex">
    <location>
        <begin position="1"/>
        <end position="209"/>
    </location>
</feature>
<feature type="DNA-binding region" description="H-T-H motif" evidence="1">
    <location>
        <begin position="16"/>
        <end position="55"/>
    </location>
</feature>
<feature type="binding site" evidence="1">
    <location>
        <begin position="90"/>
        <end position="95"/>
    </location>
    <ligand>
        <name>NAD(+)</name>
        <dbReference type="ChEBI" id="CHEBI:57540"/>
    </ligand>
</feature>
<evidence type="ECO:0000255" key="1">
    <source>
        <dbReference type="HAMAP-Rule" id="MF_01131"/>
    </source>
</evidence>
<keyword id="KW-0963">Cytoplasm</keyword>
<keyword id="KW-0238">DNA-binding</keyword>
<keyword id="KW-0520">NAD</keyword>
<keyword id="KW-0678">Repressor</keyword>
<keyword id="KW-0804">Transcription</keyword>
<keyword id="KW-0805">Transcription regulation</keyword>
<reference key="1">
    <citation type="journal article" date="2008" name="Chem. Biol. Interact.">
        <title>Extending the Bacillus cereus group genomics to putative food-borne pathogens of different toxicity.</title>
        <authorList>
            <person name="Lapidus A."/>
            <person name="Goltsman E."/>
            <person name="Auger S."/>
            <person name="Galleron N."/>
            <person name="Segurens B."/>
            <person name="Dossat C."/>
            <person name="Land M.L."/>
            <person name="Broussolle V."/>
            <person name="Brillard J."/>
            <person name="Guinebretiere M.-H."/>
            <person name="Sanchis V."/>
            <person name="Nguen-the C."/>
            <person name="Lereclus D."/>
            <person name="Richardson P."/>
            <person name="Wincker P."/>
            <person name="Weissenbach J."/>
            <person name="Ehrlich S.D."/>
            <person name="Sorokin A."/>
        </authorList>
    </citation>
    <scope>NUCLEOTIDE SEQUENCE [LARGE SCALE GENOMIC DNA]</scope>
    <source>
        <strain>DSM 22905 / CIP 110041 / 391-98 / NVH 391-98</strain>
    </source>
</reference>
<sequence length="209" mass="23616">MDQQKIPQATAKRLPLYYRFIQNLSLSGKQRVSSAELSEAVKVDSATIRRDFSYFGALGKKGYGYNVNYLLSFFRETLDQDDITRVALIGVGNLGTAFLHYNFTKNNNTKIEMAFDVDEEKVGKEIGGIPVYHLDELEERLTNDIQVAILTVPANVAQAVADRLAYTSVHGILNFTPARLNVSEKIRIHHIDLAVELQTLVYFLKNYPQ</sequence>
<gene>
    <name evidence="1" type="primary">rex</name>
    <name type="ordered locus">Bcer98_0248</name>
</gene>
<organism>
    <name type="scientific">Bacillus cytotoxicus (strain DSM 22905 / CIP 110041 / 391-98 / NVH 391-98)</name>
    <dbReference type="NCBI Taxonomy" id="315749"/>
    <lineage>
        <taxon>Bacteria</taxon>
        <taxon>Bacillati</taxon>
        <taxon>Bacillota</taxon>
        <taxon>Bacilli</taxon>
        <taxon>Bacillales</taxon>
        <taxon>Bacillaceae</taxon>
        <taxon>Bacillus</taxon>
        <taxon>Bacillus cereus group</taxon>
    </lineage>
</organism>
<dbReference type="EMBL" id="CP000764">
    <property type="protein sequence ID" value="ABS20614.1"/>
    <property type="molecule type" value="Genomic_DNA"/>
</dbReference>
<dbReference type="RefSeq" id="WP_011983373.1">
    <property type="nucleotide sequence ID" value="NC_009674.1"/>
</dbReference>
<dbReference type="SMR" id="A7GKF6"/>
<dbReference type="STRING" id="315749.Bcer98_0248"/>
<dbReference type="GeneID" id="33895592"/>
<dbReference type="KEGG" id="bcy:Bcer98_0248"/>
<dbReference type="eggNOG" id="COG2344">
    <property type="taxonomic scope" value="Bacteria"/>
</dbReference>
<dbReference type="HOGENOM" id="CLU_061534_1_1_9"/>
<dbReference type="OrthoDB" id="9784760at2"/>
<dbReference type="Proteomes" id="UP000002300">
    <property type="component" value="Chromosome"/>
</dbReference>
<dbReference type="GO" id="GO:0005737">
    <property type="term" value="C:cytoplasm"/>
    <property type="evidence" value="ECO:0007669"/>
    <property type="project" value="UniProtKB-SubCell"/>
</dbReference>
<dbReference type="GO" id="GO:0003677">
    <property type="term" value="F:DNA binding"/>
    <property type="evidence" value="ECO:0007669"/>
    <property type="project" value="UniProtKB-UniRule"/>
</dbReference>
<dbReference type="GO" id="GO:0003700">
    <property type="term" value="F:DNA-binding transcription factor activity"/>
    <property type="evidence" value="ECO:0007669"/>
    <property type="project" value="UniProtKB-UniRule"/>
</dbReference>
<dbReference type="GO" id="GO:0045892">
    <property type="term" value="P:negative regulation of DNA-templated transcription"/>
    <property type="evidence" value="ECO:0007669"/>
    <property type="project" value="InterPro"/>
</dbReference>
<dbReference type="GO" id="GO:0051775">
    <property type="term" value="P:response to redox state"/>
    <property type="evidence" value="ECO:0007669"/>
    <property type="project" value="InterPro"/>
</dbReference>
<dbReference type="Gene3D" id="3.40.50.720">
    <property type="entry name" value="NAD(P)-binding Rossmann-like Domain"/>
    <property type="match status" value="1"/>
</dbReference>
<dbReference type="Gene3D" id="1.10.10.10">
    <property type="entry name" value="Winged helix-like DNA-binding domain superfamily/Winged helix DNA-binding domain"/>
    <property type="match status" value="1"/>
</dbReference>
<dbReference type="HAMAP" id="MF_01131">
    <property type="entry name" value="Rex"/>
    <property type="match status" value="1"/>
</dbReference>
<dbReference type="InterPro" id="IPR003781">
    <property type="entry name" value="CoA-bd"/>
</dbReference>
<dbReference type="InterPro" id="IPR036291">
    <property type="entry name" value="NAD(P)-bd_dom_sf"/>
</dbReference>
<dbReference type="InterPro" id="IPR009718">
    <property type="entry name" value="Rex_DNA-bd_C_dom"/>
</dbReference>
<dbReference type="InterPro" id="IPR022876">
    <property type="entry name" value="Tscrpt_rep_Rex"/>
</dbReference>
<dbReference type="InterPro" id="IPR036388">
    <property type="entry name" value="WH-like_DNA-bd_sf"/>
</dbReference>
<dbReference type="InterPro" id="IPR036390">
    <property type="entry name" value="WH_DNA-bd_sf"/>
</dbReference>
<dbReference type="NCBIfam" id="NF003989">
    <property type="entry name" value="PRK05472.1-3"/>
    <property type="match status" value="1"/>
</dbReference>
<dbReference type="NCBIfam" id="NF003991">
    <property type="entry name" value="PRK05472.1-5"/>
    <property type="match status" value="1"/>
</dbReference>
<dbReference type="NCBIfam" id="NF003994">
    <property type="entry name" value="PRK05472.2-3"/>
    <property type="match status" value="1"/>
</dbReference>
<dbReference type="NCBIfam" id="NF003995">
    <property type="entry name" value="PRK05472.2-4"/>
    <property type="match status" value="1"/>
</dbReference>
<dbReference type="NCBIfam" id="NF003996">
    <property type="entry name" value="PRK05472.2-5"/>
    <property type="match status" value="1"/>
</dbReference>
<dbReference type="PANTHER" id="PTHR35786">
    <property type="entry name" value="REDOX-SENSING TRANSCRIPTIONAL REPRESSOR REX"/>
    <property type="match status" value="1"/>
</dbReference>
<dbReference type="PANTHER" id="PTHR35786:SF1">
    <property type="entry name" value="REDOX-SENSING TRANSCRIPTIONAL REPRESSOR REX 1"/>
    <property type="match status" value="1"/>
</dbReference>
<dbReference type="Pfam" id="PF02629">
    <property type="entry name" value="CoA_binding"/>
    <property type="match status" value="1"/>
</dbReference>
<dbReference type="Pfam" id="PF06971">
    <property type="entry name" value="Put_DNA-bind_N"/>
    <property type="match status" value="1"/>
</dbReference>
<dbReference type="SMART" id="SM00881">
    <property type="entry name" value="CoA_binding"/>
    <property type="match status" value="1"/>
</dbReference>
<dbReference type="SUPFAM" id="SSF51735">
    <property type="entry name" value="NAD(P)-binding Rossmann-fold domains"/>
    <property type="match status" value="1"/>
</dbReference>
<dbReference type="SUPFAM" id="SSF46785">
    <property type="entry name" value="Winged helix' DNA-binding domain"/>
    <property type="match status" value="1"/>
</dbReference>
<accession>A7GKF6</accession>
<protein>
    <recommendedName>
        <fullName evidence="1">Redox-sensing transcriptional repressor Rex</fullName>
    </recommendedName>
</protein>